<comment type="function">
    <text evidence="4 5">Catalyzes the biosynthesis of phosphatidylinositol (PtdIns) as well as PtdIns:inositol exchange reaction. May thus act to reduce an excessive cellular PtdIns content. The exchange activity is due to the reverse reaction of PtdIns synthase and is dependent on CMP, which is tightly bound to the enzyme.</text>
</comment>
<comment type="catalytic activity">
    <reaction evidence="4 5">
        <text>a CDP-1,2-diacyl-sn-glycerol + myo-inositol = a 1,2-diacyl-sn-glycero-3-phospho-(1D-myo-inositol) + CMP + H(+)</text>
        <dbReference type="Rhea" id="RHEA:11580"/>
        <dbReference type="ChEBI" id="CHEBI:15378"/>
        <dbReference type="ChEBI" id="CHEBI:17268"/>
        <dbReference type="ChEBI" id="CHEBI:57880"/>
        <dbReference type="ChEBI" id="CHEBI:58332"/>
        <dbReference type="ChEBI" id="CHEBI:60377"/>
        <dbReference type="EC" id="2.7.8.11"/>
    </reaction>
    <physiologicalReaction direction="left-to-right" evidence="1">
        <dbReference type="Rhea" id="RHEA:11581"/>
    </physiologicalReaction>
    <physiologicalReaction direction="right-to-left" evidence="1">
        <dbReference type="Rhea" id="RHEA:11582"/>
    </physiologicalReaction>
</comment>
<comment type="cofactor">
    <cofactor evidence="4 5">
        <name>Mn(2+)</name>
        <dbReference type="ChEBI" id="CHEBI:29035"/>
    </cofactor>
    <cofactor evidence="4 5">
        <name>Mg(2+)</name>
        <dbReference type="ChEBI" id="CHEBI:18420"/>
    </cofactor>
    <text evidence="1 4 5">Catalytic activity is higher with Mg(2+) (By similarity). According to PubMed:7998949 the cofactor is Mn(2+), while Mg(2+) is much less effective.</text>
</comment>
<comment type="subcellular location">
    <subcellularLocation>
        <location evidence="4">Endoplasmic reticulum membrane</location>
        <topology evidence="3">Multi-pass membrane protein</topology>
    </subcellularLocation>
    <subcellularLocation>
        <location evidence="4">Cell membrane</location>
        <topology evidence="3">Multi-pass membrane protein</topology>
    </subcellularLocation>
</comment>
<comment type="tissue specificity">
    <text evidence="5">Detected in liver (at protein level). Widely expressed. Highly expressed in the brain and kidney; lower levels in heart, spleen, lung, liver, skeletal muscle and testis.</text>
</comment>
<comment type="induction">
    <text>Inhibited by PtdIns (product inhibition).</text>
</comment>
<comment type="similarity">
    <text evidence="6">Belongs to the CDP-alcohol phosphatidyltransferase class-I family.</text>
</comment>
<reference key="1">
    <citation type="journal article" date="1996" name="FEBS Lett.">
        <title>Molecular cloning of rat phosphatidylinositol synthase cDNA by functional complementation of the yeast Saccharomyces cerevisiae pis mutation.</title>
        <authorList>
            <person name="Tanaka S."/>
            <person name="Nikawa J."/>
            <person name="Imai H."/>
            <person name="Yamashita S."/>
            <person name="Hosaka K."/>
        </authorList>
    </citation>
    <scope>NUCLEOTIDE SEQUENCE [MRNA]</scope>
    <source>
        <strain>Wistar</strain>
        <tissue>Brain</tissue>
    </source>
</reference>
<reference key="2">
    <citation type="submission" date="1999-01" db="EMBL/GenBank/DDBJ databases">
        <title>Exon-intron structure of rat phosphatidylinositol synthase.</title>
        <authorList>
            <person name="Nikawa J."/>
            <person name="Kojima S."/>
            <person name="Syugyo M."/>
        </authorList>
    </citation>
    <scope>NUCLEOTIDE SEQUENCE [GENOMIC DNA]</scope>
</reference>
<reference key="3">
    <citation type="journal article" date="2004" name="Genome Res.">
        <title>The status, quality, and expansion of the NIH full-length cDNA project: the Mammalian Gene Collection (MGC).</title>
        <authorList>
            <consortium name="The MGC Project Team"/>
        </authorList>
    </citation>
    <scope>NUCLEOTIDE SEQUENCE [LARGE SCALE MRNA]</scope>
    <source>
        <tissue>Lung</tissue>
    </source>
</reference>
<reference key="4">
    <citation type="journal article" date="1987" name="J. Biol. Chem.">
        <title>Regulation by phosphatidylinositol of rat pituitary plasma membrane and endoplasmic reticulum phosphatidylinositol synthase activities. A mechanism for activation of phosphoinositide resynthesis during cell stimulation.</title>
        <authorList>
            <person name="Imai A."/>
            <person name="Gershengorn M.C."/>
        </authorList>
    </citation>
    <scope>FUNCTION</scope>
    <scope>CATALYTIC ACTIVITY</scope>
    <scope>COFACTOR</scope>
    <scope>SUBCELLULAR LOCATION</scope>
    <source>
        <tissue>Pituitary</tissue>
    </source>
</reference>
<reference key="5">
    <citation type="journal article" date="1994" name="Biochem. J.">
        <title>Identification of rat liver phosphatidylinositol synthase as a 21 kDa protein.</title>
        <authorList>
            <person name="Monaco M.E."/>
            <person name="Feldman M."/>
            <person name="Kleinberg D.L."/>
        </authorList>
    </citation>
    <scope>FUNCTION</scope>
    <scope>CATALYTIC ACTIVITY</scope>
    <scope>COFACTOR</scope>
    <scope>SUBCELLULAR LOCATION</scope>
    <scope>TISSUE SPECIFICITY</scope>
    <source>
        <tissue>Liver</tissue>
    </source>
</reference>
<reference key="6">
    <citation type="journal article" date="2006" name="Proc. Natl. Acad. Sci. U.S.A.">
        <title>Quantitative phosphoproteomics of vasopressin-sensitive renal cells: regulation of aquaporin-2 phosphorylation at two sites.</title>
        <authorList>
            <person name="Hoffert J.D."/>
            <person name="Pisitkun T."/>
            <person name="Wang G."/>
            <person name="Shen R.-F."/>
            <person name="Knepper M.A."/>
        </authorList>
    </citation>
    <scope>IDENTIFICATION BY MASS SPECTROMETRY [LARGE SCALE ANALYSIS]</scope>
</reference>
<organism>
    <name type="scientific">Rattus norvegicus</name>
    <name type="common">Rat</name>
    <dbReference type="NCBI Taxonomy" id="10116"/>
    <lineage>
        <taxon>Eukaryota</taxon>
        <taxon>Metazoa</taxon>
        <taxon>Chordata</taxon>
        <taxon>Craniata</taxon>
        <taxon>Vertebrata</taxon>
        <taxon>Euteleostomi</taxon>
        <taxon>Mammalia</taxon>
        <taxon>Eutheria</taxon>
        <taxon>Euarchontoglires</taxon>
        <taxon>Glires</taxon>
        <taxon>Rodentia</taxon>
        <taxon>Myomorpha</taxon>
        <taxon>Muroidea</taxon>
        <taxon>Muridae</taxon>
        <taxon>Murinae</taxon>
        <taxon>Rattus</taxon>
    </lineage>
</organism>
<proteinExistence type="evidence at protein level"/>
<keyword id="KW-1003">Cell membrane</keyword>
<keyword id="KW-0256">Endoplasmic reticulum</keyword>
<keyword id="KW-0444">Lipid biosynthesis</keyword>
<keyword id="KW-0443">Lipid metabolism</keyword>
<keyword id="KW-0460">Magnesium</keyword>
<keyword id="KW-0464">Manganese</keyword>
<keyword id="KW-0472">Membrane</keyword>
<keyword id="KW-0479">Metal-binding</keyword>
<keyword id="KW-0594">Phospholipid biosynthesis</keyword>
<keyword id="KW-1208">Phospholipid metabolism</keyword>
<keyword id="KW-1185">Reference proteome</keyword>
<keyword id="KW-0808">Transferase</keyword>
<keyword id="KW-0812">Transmembrane</keyword>
<keyword id="KW-1133">Transmembrane helix</keyword>
<name>CDIPT_RAT</name>
<gene>
    <name evidence="7" type="primary">Cdipt</name>
    <name type="synonym">Pis1</name>
</gene>
<protein>
    <recommendedName>
        <fullName evidence="6">CDP-diacylglycerol--inositol 3-phosphatidyltransferase</fullName>
        <ecNumber evidence="5">2.7.8.11</ecNumber>
    </recommendedName>
    <alternativeName>
        <fullName>Phosphatidylinositol synthase</fullName>
        <shortName>PI synthase</shortName>
        <shortName>PtdIns synthase</shortName>
    </alternativeName>
</protein>
<sequence length="213" mass="23613">MPEENIFLFVPNLIGYARIVFAIISFYFMPCCPFTASSFYLLSGLLDAFDGHAARALNQGTRFGAMLDMLTDRCATMCLLVNLALLYPRATLLFQLSMSLDVASHWLHLHSSVVRGSESHKMIDLSGNPVLRIYYTSRPALFTLCAGNELFYCLLYLFNFSEGPLVGSVGLFRMGLWITAPIALLKSIISVIHLVTAARNMAALDAADRAKKK</sequence>
<feature type="chain" id="PRO_0000056804" description="CDP-diacylglycerol--inositol 3-phosphatidyltransferase">
    <location>
        <begin position="1"/>
        <end position="213"/>
    </location>
</feature>
<feature type="topological domain" description="Cytoplasmic" evidence="6">
    <location>
        <begin position="1"/>
        <end position="5"/>
    </location>
</feature>
<feature type="transmembrane region" description="Helical" evidence="3">
    <location>
        <begin position="6"/>
        <end position="26"/>
    </location>
</feature>
<feature type="topological domain" description="Lumenal" evidence="6">
    <location>
        <position position="27"/>
    </location>
</feature>
<feature type="transmembrane region" description="Helical" evidence="3">
    <location>
        <begin position="28"/>
        <end position="48"/>
    </location>
</feature>
<feature type="topological domain" description="Cytoplasmic" evidence="6">
    <location>
        <begin position="49"/>
        <end position="73"/>
    </location>
</feature>
<feature type="transmembrane region" description="Helical" evidence="3">
    <location>
        <begin position="74"/>
        <end position="94"/>
    </location>
</feature>
<feature type="topological domain" description="Lumenal" evidence="6">
    <location>
        <position position="95"/>
    </location>
</feature>
<feature type="transmembrane region" description="Helical" evidence="6">
    <location>
        <begin position="96"/>
        <end position="116"/>
    </location>
</feature>
<feature type="topological domain" description="Cytoplasmic" evidence="6">
    <location>
        <begin position="117"/>
        <end position="139"/>
    </location>
</feature>
<feature type="transmembrane region" description="Helical" evidence="3">
    <location>
        <begin position="140"/>
        <end position="160"/>
    </location>
</feature>
<feature type="topological domain" description="Lumenal" evidence="6">
    <location>
        <begin position="161"/>
        <end position="174"/>
    </location>
</feature>
<feature type="transmembrane region" description="Helical" evidence="3">
    <location>
        <begin position="175"/>
        <end position="195"/>
    </location>
</feature>
<feature type="topological domain" description="Cytoplasmic" evidence="6">
    <location>
        <begin position="196"/>
        <end position="213"/>
    </location>
</feature>
<feature type="active site" description="Proton acceptor" evidence="2">
    <location>
        <position position="72"/>
    </location>
</feature>
<feature type="binding site" evidence="2">
    <location>
        <position position="47"/>
    </location>
    <ligand>
        <name>Mg(2+)</name>
        <dbReference type="ChEBI" id="CHEBI:18420"/>
        <label>1</label>
    </ligand>
</feature>
<feature type="binding site" evidence="2">
    <location>
        <position position="47"/>
    </location>
    <ligand>
        <name>Mg(2+)</name>
        <dbReference type="ChEBI" id="CHEBI:18420"/>
        <label>2</label>
    </ligand>
</feature>
<feature type="binding site" evidence="2">
    <location>
        <position position="50"/>
    </location>
    <ligand>
        <name>Mg(2+)</name>
        <dbReference type="ChEBI" id="CHEBI:18420"/>
        <label>1</label>
    </ligand>
</feature>
<feature type="binding site" evidence="2">
    <location>
        <position position="51"/>
    </location>
    <ligand>
        <name>a CDP-1,2-diacyl-sn-glycerol</name>
        <dbReference type="ChEBI" id="CHEBI:58332"/>
    </ligand>
</feature>
<feature type="binding site" evidence="2">
    <location>
        <position position="55"/>
    </location>
    <ligand>
        <name>a CDP-1,2-diacyl-sn-glycerol</name>
        <dbReference type="ChEBI" id="CHEBI:58332"/>
    </ligand>
</feature>
<feature type="binding site" evidence="2">
    <location>
        <position position="61"/>
    </location>
    <ligand>
        <name>a CDP-1,2-diacyl-sn-glycerol</name>
        <dbReference type="ChEBI" id="CHEBI:58332"/>
    </ligand>
</feature>
<feature type="binding site" evidence="2">
    <location>
        <position position="68"/>
    </location>
    <ligand>
        <name>Mg(2+)</name>
        <dbReference type="ChEBI" id="CHEBI:18420"/>
        <label>1</label>
    </ligand>
</feature>
<feature type="binding site" evidence="2">
    <location>
        <position position="68"/>
    </location>
    <ligand>
        <name>Mg(2+)</name>
        <dbReference type="ChEBI" id="CHEBI:18420"/>
        <label>2</label>
    </ligand>
</feature>
<feature type="binding site" evidence="2">
    <location>
        <position position="72"/>
    </location>
    <ligand>
        <name>Mg(2+)</name>
        <dbReference type="ChEBI" id="CHEBI:18420"/>
        <label>2</label>
    </ligand>
</feature>
<dbReference type="EC" id="2.7.8.11" evidence="5"/>
<dbReference type="EMBL" id="D82928">
    <property type="protein sequence ID" value="BAA11634.1"/>
    <property type="molecule type" value="mRNA"/>
</dbReference>
<dbReference type="EMBL" id="AB022890">
    <property type="protein sequence ID" value="BAA82112.1"/>
    <property type="molecule type" value="Genomic_DNA"/>
</dbReference>
<dbReference type="EMBL" id="BC070876">
    <property type="protein sequence ID" value="AAH70876.1"/>
    <property type="molecule type" value="mRNA"/>
</dbReference>
<dbReference type="PIR" id="S74247">
    <property type="entry name" value="S74247"/>
</dbReference>
<dbReference type="RefSeq" id="NP_620254.1">
    <property type="nucleotide sequence ID" value="NM_138899.2"/>
</dbReference>
<dbReference type="RefSeq" id="XP_006230270.1">
    <property type="nucleotide sequence ID" value="XM_006230208.1"/>
</dbReference>
<dbReference type="SMR" id="P70500"/>
<dbReference type="FunCoup" id="P70500">
    <property type="interactions" value="2740"/>
</dbReference>
<dbReference type="IntAct" id="P70500">
    <property type="interactions" value="1"/>
</dbReference>
<dbReference type="STRING" id="10116.ENSRNOP00000013691"/>
<dbReference type="iPTMnet" id="P70500"/>
<dbReference type="PhosphoSitePlus" id="P70500"/>
<dbReference type="jPOST" id="P70500"/>
<dbReference type="PaxDb" id="10116-ENSRNOP00000013691"/>
<dbReference type="Ensembl" id="ENSRNOT00000091295.2">
    <property type="protein sequence ID" value="ENSRNOP00000070871.1"/>
    <property type="gene ID" value="ENSRNOG00000024144.5"/>
</dbReference>
<dbReference type="GeneID" id="192260"/>
<dbReference type="KEGG" id="rno:192260"/>
<dbReference type="UCSC" id="RGD:620576">
    <property type="organism name" value="rat"/>
</dbReference>
<dbReference type="AGR" id="RGD:620576"/>
<dbReference type="CTD" id="10423"/>
<dbReference type="RGD" id="620576">
    <property type="gene designation" value="Cdipt"/>
</dbReference>
<dbReference type="eggNOG" id="KOG3240">
    <property type="taxonomic scope" value="Eukaryota"/>
</dbReference>
<dbReference type="GeneTree" id="ENSGT00940000154169"/>
<dbReference type="HOGENOM" id="CLU_067602_2_0_1"/>
<dbReference type="InParanoid" id="P70500"/>
<dbReference type="OMA" id="AQTYSEN"/>
<dbReference type="OrthoDB" id="29501at9989"/>
<dbReference type="PhylomeDB" id="P70500"/>
<dbReference type="TreeFam" id="TF314603"/>
<dbReference type="Reactome" id="R-RNO-1483226">
    <property type="pathway name" value="Synthesis of PI"/>
</dbReference>
<dbReference type="SABIO-RK" id="P70500"/>
<dbReference type="PRO" id="PR:P70500"/>
<dbReference type="Proteomes" id="UP000002494">
    <property type="component" value="Chromosome 1"/>
</dbReference>
<dbReference type="Bgee" id="ENSRNOG00000024144">
    <property type="expression patterns" value="Expressed in cerebellum and 20 other cell types or tissues"/>
</dbReference>
<dbReference type="GO" id="GO:0005789">
    <property type="term" value="C:endoplasmic reticulum membrane"/>
    <property type="evidence" value="ECO:0007669"/>
    <property type="project" value="UniProtKB-SubCell"/>
</dbReference>
<dbReference type="GO" id="GO:0005794">
    <property type="term" value="C:Golgi apparatus"/>
    <property type="evidence" value="ECO:0000318"/>
    <property type="project" value="GO_Central"/>
</dbReference>
<dbReference type="GO" id="GO:0016020">
    <property type="term" value="C:membrane"/>
    <property type="evidence" value="ECO:0000250"/>
    <property type="project" value="UniProtKB"/>
</dbReference>
<dbReference type="GO" id="GO:0005886">
    <property type="term" value="C:plasma membrane"/>
    <property type="evidence" value="ECO:0007669"/>
    <property type="project" value="UniProtKB-SubCell"/>
</dbReference>
<dbReference type="GO" id="GO:0043178">
    <property type="term" value="F:alcohol binding"/>
    <property type="evidence" value="ECO:0000353"/>
    <property type="project" value="RGD"/>
</dbReference>
<dbReference type="GO" id="GO:0030246">
    <property type="term" value="F:carbohydrate binding"/>
    <property type="evidence" value="ECO:0000353"/>
    <property type="project" value="RGD"/>
</dbReference>
<dbReference type="GO" id="GO:0003881">
    <property type="term" value="F:CDP-diacylglycerol-inositol 3-phosphatidyltransferase activity"/>
    <property type="evidence" value="ECO:0000314"/>
    <property type="project" value="RGD"/>
</dbReference>
<dbReference type="GO" id="GO:0019992">
    <property type="term" value="F:diacylglycerol binding"/>
    <property type="evidence" value="ECO:0000353"/>
    <property type="project" value="RGD"/>
</dbReference>
<dbReference type="GO" id="GO:0030145">
    <property type="term" value="F:manganese ion binding"/>
    <property type="evidence" value="ECO:0000314"/>
    <property type="project" value="RGD"/>
</dbReference>
<dbReference type="GO" id="GO:0046341">
    <property type="term" value="P:CDP-diacylglycerol metabolic process"/>
    <property type="evidence" value="ECO:0000314"/>
    <property type="project" value="RGD"/>
</dbReference>
<dbReference type="GO" id="GO:0006661">
    <property type="term" value="P:phosphatidylinositol biosynthetic process"/>
    <property type="evidence" value="ECO:0000314"/>
    <property type="project" value="RGD"/>
</dbReference>
<dbReference type="FunFam" id="1.20.120.1760:FF:000003">
    <property type="entry name" value="CDP-diacylglycerol--inositol 3-phosphatidyltransferase"/>
    <property type="match status" value="1"/>
</dbReference>
<dbReference type="Gene3D" id="1.20.120.1760">
    <property type="match status" value="1"/>
</dbReference>
<dbReference type="InterPro" id="IPR000462">
    <property type="entry name" value="CDP-OH_P_trans"/>
</dbReference>
<dbReference type="InterPro" id="IPR043130">
    <property type="entry name" value="CDP-OH_PTrfase_TM_dom"/>
</dbReference>
<dbReference type="InterPro" id="IPR048254">
    <property type="entry name" value="CDP_ALCOHOL_P_TRANSF_CS"/>
</dbReference>
<dbReference type="InterPro" id="IPR014387">
    <property type="entry name" value="CDP_diag_ino_3_P_euk"/>
</dbReference>
<dbReference type="PANTHER" id="PTHR15362:SF4">
    <property type="entry name" value="CDP-DIACYLGLYCEROL--INOSITOL 3-PHOSPHATIDYLTRANSFERASE"/>
    <property type="match status" value="1"/>
</dbReference>
<dbReference type="PANTHER" id="PTHR15362">
    <property type="entry name" value="PHOSPHATIDYLINOSITOL SYNTHASE"/>
    <property type="match status" value="1"/>
</dbReference>
<dbReference type="Pfam" id="PF01066">
    <property type="entry name" value="CDP-OH_P_transf"/>
    <property type="match status" value="1"/>
</dbReference>
<dbReference type="PIRSF" id="PIRSF000848">
    <property type="entry name" value="CDP_diag_ino_3_P"/>
    <property type="match status" value="1"/>
</dbReference>
<dbReference type="PROSITE" id="PS00379">
    <property type="entry name" value="CDP_ALCOHOL_P_TRANSF"/>
    <property type="match status" value="1"/>
</dbReference>
<accession>P70500</accession>
<evidence type="ECO:0000250" key="1">
    <source>
        <dbReference type="UniProtKB" id="O14735"/>
    </source>
</evidence>
<evidence type="ECO:0000250" key="2">
    <source>
        <dbReference type="UniProtKB" id="P9WPG7"/>
    </source>
</evidence>
<evidence type="ECO:0000255" key="3"/>
<evidence type="ECO:0000269" key="4">
    <source>
    </source>
</evidence>
<evidence type="ECO:0000269" key="5">
    <source>
    </source>
</evidence>
<evidence type="ECO:0000305" key="6"/>
<evidence type="ECO:0000312" key="7">
    <source>
        <dbReference type="RGD" id="620576"/>
    </source>
</evidence>